<reference key="1">
    <citation type="journal article" date="2008" name="Appl. Environ. Microbiol.">
        <title>The genome of Polaromonas sp. strain JS666: insights into the evolution of a hydrocarbon- and xenobiotic-degrading bacterium, and features of relevance to biotechnology.</title>
        <authorList>
            <person name="Mattes T.E."/>
            <person name="Alexander A.K."/>
            <person name="Richardson P.M."/>
            <person name="Munk A.C."/>
            <person name="Han C.S."/>
            <person name="Stothard P."/>
            <person name="Coleman N.V."/>
        </authorList>
    </citation>
    <scope>NUCLEOTIDE SEQUENCE [LARGE SCALE GENOMIC DNA]</scope>
    <source>
        <strain>JS666 / ATCC BAA-500</strain>
    </source>
</reference>
<dbReference type="EMBL" id="CP000316">
    <property type="protein sequence ID" value="ABE46333.1"/>
    <property type="molecule type" value="Genomic_DNA"/>
</dbReference>
<dbReference type="RefSeq" id="WP_011485322.1">
    <property type="nucleotide sequence ID" value="NC_007948.1"/>
</dbReference>
<dbReference type="SMR" id="Q123F9"/>
<dbReference type="STRING" id="296591.Bpro_4446"/>
<dbReference type="KEGG" id="pol:Bpro_4446"/>
<dbReference type="eggNOG" id="COG0080">
    <property type="taxonomic scope" value="Bacteria"/>
</dbReference>
<dbReference type="HOGENOM" id="CLU_074237_2_0_4"/>
<dbReference type="OrthoDB" id="9802408at2"/>
<dbReference type="Proteomes" id="UP000001983">
    <property type="component" value="Chromosome"/>
</dbReference>
<dbReference type="GO" id="GO:0022625">
    <property type="term" value="C:cytosolic large ribosomal subunit"/>
    <property type="evidence" value="ECO:0007669"/>
    <property type="project" value="TreeGrafter"/>
</dbReference>
<dbReference type="GO" id="GO:0070180">
    <property type="term" value="F:large ribosomal subunit rRNA binding"/>
    <property type="evidence" value="ECO:0007669"/>
    <property type="project" value="UniProtKB-UniRule"/>
</dbReference>
<dbReference type="GO" id="GO:0003735">
    <property type="term" value="F:structural constituent of ribosome"/>
    <property type="evidence" value="ECO:0007669"/>
    <property type="project" value="InterPro"/>
</dbReference>
<dbReference type="GO" id="GO:0006412">
    <property type="term" value="P:translation"/>
    <property type="evidence" value="ECO:0007669"/>
    <property type="project" value="UniProtKB-UniRule"/>
</dbReference>
<dbReference type="CDD" id="cd00349">
    <property type="entry name" value="Ribosomal_L11"/>
    <property type="match status" value="1"/>
</dbReference>
<dbReference type="FunFam" id="1.10.10.250:FF:000001">
    <property type="entry name" value="50S ribosomal protein L11"/>
    <property type="match status" value="1"/>
</dbReference>
<dbReference type="FunFam" id="3.30.1550.10:FF:000001">
    <property type="entry name" value="50S ribosomal protein L11"/>
    <property type="match status" value="1"/>
</dbReference>
<dbReference type="Gene3D" id="1.10.10.250">
    <property type="entry name" value="Ribosomal protein L11, C-terminal domain"/>
    <property type="match status" value="1"/>
</dbReference>
<dbReference type="Gene3D" id="3.30.1550.10">
    <property type="entry name" value="Ribosomal protein L11/L12, N-terminal domain"/>
    <property type="match status" value="1"/>
</dbReference>
<dbReference type="HAMAP" id="MF_00736">
    <property type="entry name" value="Ribosomal_uL11"/>
    <property type="match status" value="1"/>
</dbReference>
<dbReference type="InterPro" id="IPR000911">
    <property type="entry name" value="Ribosomal_uL11"/>
</dbReference>
<dbReference type="InterPro" id="IPR006519">
    <property type="entry name" value="Ribosomal_uL11_bac-typ"/>
</dbReference>
<dbReference type="InterPro" id="IPR020783">
    <property type="entry name" value="Ribosomal_uL11_C"/>
</dbReference>
<dbReference type="InterPro" id="IPR036769">
    <property type="entry name" value="Ribosomal_uL11_C_sf"/>
</dbReference>
<dbReference type="InterPro" id="IPR020785">
    <property type="entry name" value="Ribosomal_uL11_CS"/>
</dbReference>
<dbReference type="InterPro" id="IPR020784">
    <property type="entry name" value="Ribosomal_uL11_N"/>
</dbReference>
<dbReference type="InterPro" id="IPR036796">
    <property type="entry name" value="Ribosomal_uL11_N_sf"/>
</dbReference>
<dbReference type="NCBIfam" id="TIGR01632">
    <property type="entry name" value="L11_bact"/>
    <property type="match status" value="1"/>
</dbReference>
<dbReference type="PANTHER" id="PTHR11661">
    <property type="entry name" value="60S RIBOSOMAL PROTEIN L12"/>
    <property type="match status" value="1"/>
</dbReference>
<dbReference type="PANTHER" id="PTHR11661:SF1">
    <property type="entry name" value="LARGE RIBOSOMAL SUBUNIT PROTEIN UL11M"/>
    <property type="match status" value="1"/>
</dbReference>
<dbReference type="Pfam" id="PF00298">
    <property type="entry name" value="Ribosomal_L11"/>
    <property type="match status" value="1"/>
</dbReference>
<dbReference type="Pfam" id="PF03946">
    <property type="entry name" value="Ribosomal_L11_N"/>
    <property type="match status" value="1"/>
</dbReference>
<dbReference type="SMART" id="SM00649">
    <property type="entry name" value="RL11"/>
    <property type="match status" value="1"/>
</dbReference>
<dbReference type="SUPFAM" id="SSF54747">
    <property type="entry name" value="Ribosomal L11/L12e N-terminal domain"/>
    <property type="match status" value="1"/>
</dbReference>
<dbReference type="SUPFAM" id="SSF46906">
    <property type="entry name" value="Ribosomal protein L11, C-terminal domain"/>
    <property type="match status" value="1"/>
</dbReference>
<dbReference type="PROSITE" id="PS00359">
    <property type="entry name" value="RIBOSOMAL_L11"/>
    <property type="match status" value="1"/>
</dbReference>
<sequence>MAKKIVGFVKLQVPAGKANPSPPIGPALGQRGLNIMEFCKAFNAQTQGVEPGLPLPVVITAYADKSFTFIIKTPPAVTLIKKAIKLDKGSATPHTAKVGKITRAQLEEIAKTKMKDMTAADLDAAVRTIAGSARSMGVTVEGVV</sequence>
<evidence type="ECO:0000255" key="1">
    <source>
        <dbReference type="HAMAP-Rule" id="MF_00736"/>
    </source>
</evidence>
<evidence type="ECO:0000305" key="2"/>
<proteinExistence type="inferred from homology"/>
<name>RL11_POLSJ</name>
<protein>
    <recommendedName>
        <fullName evidence="1">Large ribosomal subunit protein uL11</fullName>
    </recommendedName>
    <alternativeName>
        <fullName evidence="2">50S ribosomal protein L11</fullName>
    </alternativeName>
</protein>
<accession>Q123F9</accession>
<feature type="chain" id="PRO_0000258183" description="Large ribosomal subunit protein uL11">
    <location>
        <begin position="1"/>
        <end position="144"/>
    </location>
</feature>
<comment type="function">
    <text evidence="1">Forms part of the ribosomal stalk which helps the ribosome interact with GTP-bound translation factors.</text>
</comment>
<comment type="subunit">
    <text evidence="1">Part of the ribosomal stalk of the 50S ribosomal subunit. Interacts with L10 and the large rRNA to form the base of the stalk. L10 forms an elongated spine to which L12 dimers bind in a sequential fashion forming a multimeric L10(L12)X complex.</text>
</comment>
<comment type="PTM">
    <text evidence="1">One or more lysine residues are methylated.</text>
</comment>
<comment type="similarity">
    <text evidence="1">Belongs to the universal ribosomal protein uL11 family.</text>
</comment>
<organism>
    <name type="scientific">Polaromonas sp. (strain JS666 / ATCC BAA-500)</name>
    <dbReference type="NCBI Taxonomy" id="296591"/>
    <lineage>
        <taxon>Bacteria</taxon>
        <taxon>Pseudomonadati</taxon>
        <taxon>Pseudomonadota</taxon>
        <taxon>Betaproteobacteria</taxon>
        <taxon>Burkholderiales</taxon>
        <taxon>Comamonadaceae</taxon>
        <taxon>Polaromonas</taxon>
    </lineage>
</organism>
<gene>
    <name evidence="1" type="primary">rplK</name>
    <name type="ordered locus">Bpro_4446</name>
</gene>
<keyword id="KW-0488">Methylation</keyword>
<keyword id="KW-1185">Reference proteome</keyword>
<keyword id="KW-0687">Ribonucleoprotein</keyword>
<keyword id="KW-0689">Ribosomal protein</keyword>
<keyword id="KW-0694">RNA-binding</keyword>
<keyword id="KW-0699">rRNA-binding</keyword>